<keyword id="KW-0217">Developmental protein</keyword>
<keyword id="KW-0238">DNA-binding</keyword>
<keyword id="KW-0539">Nucleus</keyword>
<keyword id="KW-0597">Phosphoprotein</keyword>
<keyword id="KW-1185">Reference proteome</keyword>
<keyword id="KW-0804">Transcription</keyword>
<keyword id="KW-0805">Transcription regulation</keyword>
<organism>
    <name type="scientific">Canis lupus familiaris</name>
    <name type="common">Dog</name>
    <name type="synonym">Canis familiaris</name>
    <dbReference type="NCBI Taxonomy" id="9615"/>
    <lineage>
        <taxon>Eukaryota</taxon>
        <taxon>Metazoa</taxon>
        <taxon>Chordata</taxon>
        <taxon>Craniata</taxon>
        <taxon>Vertebrata</taxon>
        <taxon>Euteleostomi</taxon>
        <taxon>Mammalia</taxon>
        <taxon>Eutheria</taxon>
        <taxon>Laurasiatheria</taxon>
        <taxon>Carnivora</taxon>
        <taxon>Caniformia</taxon>
        <taxon>Canidae</taxon>
        <taxon>Canis</taxon>
    </lineage>
</organism>
<name>FOXI3_CANLF</name>
<proteinExistence type="inferred from homology"/>
<accession>B5RHS5</accession>
<reference key="1">
    <citation type="journal article" date="2008" name="Science">
        <title>A mutation in hairless dogs implicates FOXI3 in ectodermal development.</title>
        <authorList>
            <person name="Droegemueller C."/>
            <person name="Karlsson E.K."/>
            <person name="Hytoenen M.K."/>
            <person name="Perloski M."/>
            <person name="Dolf G."/>
            <person name="Sainio K."/>
            <person name="Lohi H."/>
            <person name="Lindblad-Toh K."/>
            <person name="Leeb T."/>
        </authorList>
    </citation>
    <scope>NUCLEOTIDE SEQUENCE [GENOMIC DNA]</scope>
    <scope>FUNCTION</scope>
    <scope>INVOLVEMENT IN DISEASE</scope>
</reference>
<reference key="2">
    <citation type="journal article" date="2017" name="Sci. Rep.">
        <title>The dental phenotype of hairless dogs with FOXI3 haploinsufficiency.</title>
        <authorList>
            <person name="Kupczik K."/>
            <person name="Cagan A."/>
            <person name="Brauer S."/>
            <person name="Fischer M.S."/>
        </authorList>
    </citation>
    <scope>FUNCTION</scope>
    <scope>INVOLVEMENT IN DISEASE</scope>
</reference>
<evidence type="ECO:0000250" key="1">
    <source>
        <dbReference type="UniProtKB" id="A8MTJ6"/>
    </source>
</evidence>
<evidence type="ECO:0000250" key="2">
    <source>
        <dbReference type="UniProtKB" id="D3Z120"/>
    </source>
</evidence>
<evidence type="ECO:0000255" key="3">
    <source>
        <dbReference type="PROSITE-ProRule" id="PRU00089"/>
    </source>
</evidence>
<evidence type="ECO:0000256" key="4">
    <source>
        <dbReference type="SAM" id="MobiDB-lite"/>
    </source>
</evidence>
<evidence type="ECO:0000269" key="5">
    <source>
    </source>
</evidence>
<evidence type="ECO:0000269" key="6">
    <source>
    </source>
</evidence>
<evidence type="ECO:0000303" key="7">
    <source>
    </source>
</evidence>
<evidence type="ECO:0000305" key="8"/>
<feature type="chain" id="PRO_0000367050" description="Forkhead box protein I3">
    <location>
        <begin position="1"/>
        <end position="436"/>
    </location>
</feature>
<feature type="DNA-binding region" description="Fork-head" evidence="3">
    <location>
        <begin position="158"/>
        <end position="252"/>
    </location>
</feature>
<feature type="region of interest" description="Disordered" evidence="4">
    <location>
        <begin position="249"/>
        <end position="319"/>
    </location>
</feature>
<feature type="region of interest" description="Disordered" evidence="4">
    <location>
        <begin position="340"/>
        <end position="410"/>
    </location>
</feature>
<feature type="short sequence motif" description="Nuclear localization signal" evidence="1">
    <location>
        <begin position="248"/>
        <end position="254"/>
    </location>
</feature>
<feature type="short sequence motif" description="9aaTAD" evidence="2">
    <location>
        <begin position="422"/>
        <end position="430"/>
    </location>
</feature>
<feature type="compositionally biased region" description="Low complexity" evidence="4">
    <location>
        <begin position="257"/>
        <end position="277"/>
    </location>
</feature>
<feature type="compositionally biased region" description="Gly residues" evidence="4">
    <location>
        <begin position="278"/>
        <end position="287"/>
    </location>
</feature>
<feature type="compositionally biased region" description="Low complexity" evidence="4">
    <location>
        <begin position="385"/>
        <end position="410"/>
    </location>
</feature>
<feature type="modified residue" description="Phosphoserine" evidence="2">
    <location>
        <position position="132"/>
    </location>
</feature>
<feature type="modified residue" description="Phosphoserine" evidence="2">
    <location>
        <position position="292"/>
    </location>
</feature>
<feature type="modified residue" description="Phosphoserine" evidence="2">
    <location>
        <position position="302"/>
    </location>
</feature>
<gene>
    <name evidence="7" type="primary">FOXI3</name>
</gene>
<protein>
    <recommendedName>
        <fullName evidence="8">Forkhead box protein I3</fullName>
    </recommendedName>
</protein>
<sequence length="436" mass="44053">MALYCGDNFGVYSQPGLPPPAAAAAAAAAAPGAPPASRAPYALADYAAPPAAAANPYLWLNGPGVGVGVGVGVGGPPAAAAAAAAAYLGAPPPPPPPPGGAAGPFLQPPPAAGTFGCAQRAFAQPAPAAPASPAGPAAPGELGWLSMASREDLMKMVRPPYSYSALIAMAIQSAPERKLTLSHIYQFVADSFPFYQRSKAGWQNSIRHNLSLNDCFKKVPRDEDDPGKGNYWTLDPNCEKMFDNGNFRRKRKRRSEASSASTSTVAAGTTKSEEGLSSGLGSGVGGKPEGDSPSALLRPPQSPEPPEGTKSTASSPGGSLLSSAPCLNTFFSSLSTLSVSSSGGAQRAGPGSRHLGIQGTPLSSSGAFPASCISSEAPPDTLQLSNGASSGSGQRSSYYSPFPASTSGGQSSPFGSPFYNFSMVNSLIYPREGSEV</sequence>
<comment type="function">
    <text evidence="2 5 6">Transcription factor required for pharyngeal arch development, and which is involved in hair, ear, jaw and dental development (PubMed:18787161, PubMed:28710361). May act as a pioneer transcription factor during pharyngeal arch development (By similarity). Required for the development of the epithelium of hair and whisker placodes and that of teeth (PubMed:18787161, PubMed:28710361). Required for hair follicle stem cell specification (By similarity). Acts downstream of TBX1 for the formation of the thymus and parathyroid glands from the third pharyngeal pouch (By similarity).</text>
</comment>
<comment type="subcellular location">
    <subcellularLocation>
        <location evidence="2">Nucleus</location>
    </subcellularLocation>
</comment>
<comment type="domain">
    <text evidence="2">The 9aaTAD motif is a transactivation domain present in a large number of yeast and animal transcription factors.</text>
</comment>
<comment type="PTM">
    <text evidence="2">Phosphorylation promotes the transcription factor activity. Dephosphorylation by protein phosphatase 2A (PP2A) reduces its activity.</text>
</comment>
<comment type="disease">
    <text evidence="5 6">Defects in FOXI3 are the cause of canine ectodermal dysplasia (CED) (PubMed:18787161). CED is an autosomal semi-dominant trait characterized by missing or abnormally shaped teeth in addition to a hair coat that is sparse or absent (PubMed:18787161). Haploinsufficiency of FOXI3 leads to an incomplete development of the lingually positioned cusps in the trigon and talon parts of both upper and lower molars and deciduous fourth premolars, respectively. As a result, the mandibular first molars in the hairless dogs are mesiodistally shorter than those in the coated dogs (PubMed:28710361). Heterozygous mutants are found in Mexican and Peruvian hairless dogs and in Chinese crested dogs (PubMed:18787161). Homozygous mutants die during embryogenesis (PubMed:18787161).</text>
</comment>
<dbReference type="EMBL" id="AM998820">
    <property type="protein sequence ID" value="CAQ53186.1"/>
    <property type="molecule type" value="Genomic_DNA"/>
</dbReference>
<dbReference type="RefSeq" id="NP_001129118.1">
    <property type="nucleotide sequence ID" value="NM_001135646.1"/>
</dbReference>
<dbReference type="SMR" id="B5RHS5"/>
<dbReference type="STRING" id="9615.ENSCAFP00000041322"/>
<dbReference type="PaxDb" id="9612-ENSCAFP00000041322"/>
<dbReference type="GeneID" id="483075"/>
<dbReference type="KEGG" id="cfa:483075"/>
<dbReference type="CTD" id="344167"/>
<dbReference type="eggNOG" id="KOG2294">
    <property type="taxonomic scope" value="Eukaryota"/>
</dbReference>
<dbReference type="InParanoid" id="B5RHS5"/>
<dbReference type="OrthoDB" id="5402974at2759"/>
<dbReference type="Proteomes" id="UP000002254">
    <property type="component" value="Unplaced"/>
</dbReference>
<dbReference type="Proteomes" id="UP000694429">
    <property type="component" value="Unplaced"/>
</dbReference>
<dbReference type="Proteomes" id="UP000694542">
    <property type="component" value="Unplaced"/>
</dbReference>
<dbReference type="Proteomes" id="UP000805418">
    <property type="component" value="Unplaced"/>
</dbReference>
<dbReference type="GO" id="GO:0005634">
    <property type="term" value="C:nucleus"/>
    <property type="evidence" value="ECO:0000250"/>
    <property type="project" value="UniProtKB"/>
</dbReference>
<dbReference type="GO" id="GO:0000981">
    <property type="term" value="F:DNA-binding transcription factor activity, RNA polymerase II-specific"/>
    <property type="evidence" value="ECO:0000250"/>
    <property type="project" value="UniProtKB"/>
</dbReference>
<dbReference type="GO" id="GO:0000978">
    <property type="term" value="F:RNA polymerase II cis-regulatory region sequence-specific DNA binding"/>
    <property type="evidence" value="ECO:0000318"/>
    <property type="project" value="GO_Central"/>
</dbReference>
<dbReference type="GO" id="GO:0009653">
    <property type="term" value="P:anatomical structure morphogenesis"/>
    <property type="evidence" value="ECO:0000318"/>
    <property type="project" value="GO_Central"/>
</dbReference>
<dbReference type="GO" id="GO:0030154">
    <property type="term" value="P:cell differentiation"/>
    <property type="evidence" value="ECO:0000318"/>
    <property type="project" value="GO_Central"/>
</dbReference>
<dbReference type="GO" id="GO:0009957">
    <property type="term" value="P:epidermal cell fate specification"/>
    <property type="evidence" value="ECO:0000250"/>
    <property type="project" value="UniProtKB"/>
</dbReference>
<dbReference type="GO" id="GO:0001942">
    <property type="term" value="P:hair follicle development"/>
    <property type="evidence" value="ECO:0000250"/>
    <property type="project" value="UniProtKB"/>
</dbReference>
<dbReference type="GO" id="GO:0042475">
    <property type="term" value="P:odontogenesis of dentin-containing tooth"/>
    <property type="evidence" value="ECO:0000315"/>
    <property type="project" value="UniProtKB"/>
</dbReference>
<dbReference type="GO" id="GO:1905040">
    <property type="term" value="P:otic placode development"/>
    <property type="evidence" value="ECO:0000250"/>
    <property type="project" value="UniProtKB"/>
</dbReference>
<dbReference type="GO" id="GO:0060017">
    <property type="term" value="P:parathyroid gland development"/>
    <property type="evidence" value="ECO:0000250"/>
    <property type="project" value="UniProtKB"/>
</dbReference>
<dbReference type="GO" id="GO:0006357">
    <property type="term" value="P:regulation of transcription by RNA polymerase II"/>
    <property type="evidence" value="ECO:0000318"/>
    <property type="project" value="GO_Central"/>
</dbReference>
<dbReference type="GO" id="GO:0048538">
    <property type="term" value="P:thymus development"/>
    <property type="evidence" value="ECO:0000250"/>
    <property type="project" value="UniProtKB"/>
</dbReference>
<dbReference type="FunFam" id="1.10.10.10:FF:000016">
    <property type="entry name" value="Forkhead box protein I1"/>
    <property type="match status" value="1"/>
</dbReference>
<dbReference type="Gene3D" id="1.10.10.10">
    <property type="entry name" value="Winged helix-like DNA-binding domain superfamily/Winged helix DNA-binding domain"/>
    <property type="match status" value="1"/>
</dbReference>
<dbReference type="InterPro" id="IPR001766">
    <property type="entry name" value="Fork_head_dom"/>
</dbReference>
<dbReference type="InterPro" id="IPR050211">
    <property type="entry name" value="FOX_domain-containing"/>
</dbReference>
<dbReference type="InterPro" id="IPR018122">
    <property type="entry name" value="TF_fork_head_CS_1"/>
</dbReference>
<dbReference type="InterPro" id="IPR030456">
    <property type="entry name" value="TF_fork_head_CS_2"/>
</dbReference>
<dbReference type="InterPro" id="IPR036388">
    <property type="entry name" value="WH-like_DNA-bd_sf"/>
</dbReference>
<dbReference type="InterPro" id="IPR036390">
    <property type="entry name" value="WH_DNA-bd_sf"/>
</dbReference>
<dbReference type="PANTHER" id="PTHR11829">
    <property type="entry name" value="FORKHEAD BOX PROTEIN"/>
    <property type="match status" value="1"/>
</dbReference>
<dbReference type="PANTHER" id="PTHR11829:SF310">
    <property type="entry name" value="FORKHEAD BOX PROTEIN I3"/>
    <property type="match status" value="1"/>
</dbReference>
<dbReference type="Pfam" id="PF00250">
    <property type="entry name" value="Forkhead"/>
    <property type="match status" value="1"/>
</dbReference>
<dbReference type="PRINTS" id="PR00053">
    <property type="entry name" value="FORKHEAD"/>
</dbReference>
<dbReference type="SMART" id="SM00339">
    <property type="entry name" value="FH"/>
    <property type="match status" value="1"/>
</dbReference>
<dbReference type="SUPFAM" id="SSF46785">
    <property type="entry name" value="Winged helix' DNA-binding domain"/>
    <property type="match status" value="1"/>
</dbReference>
<dbReference type="PROSITE" id="PS00657">
    <property type="entry name" value="FORK_HEAD_1"/>
    <property type="match status" value="1"/>
</dbReference>
<dbReference type="PROSITE" id="PS00658">
    <property type="entry name" value="FORK_HEAD_2"/>
    <property type="match status" value="1"/>
</dbReference>
<dbReference type="PROSITE" id="PS50039">
    <property type="entry name" value="FORK_HEAD_3"/>
    <property type="match status" value="1"/>
</dbReference>